<protein>
    <recommendedName>
        <fullName evidence="1">Bifunctional purine biosynthesis protein PurH</fullName>
    </recommendedName>
    <domain>
        <recommendedName>
            <fullName evidence="1">Phosphoribosylaminoimidazolecarboxamide formyltransferase</fullName>
            <ecNumber evidence="1">2.1.2.3</ecNumber>
        </recommendedName>
        <alternativeName>
            <fullName evidence="1">AICAR transformylase</fullName>
        </alternativeName>
    </domain>
    <domain>
        <recommendedName>
            <fullName evidence="1">IMP cyclohydrolase</fullName>
            <ecNumber evidence="1">3.5.4.10</ecNumber>
        </recommendedName>
        <alternativeName>
            <fullName evidence="1">ATIC</fullName>
        </alternativeName>
        <alternativeName>
            <fullName evidence="1">IMP synthase</fullName>
        </alternativeName>
        <alternativeName>
            <fullName evidence="1">Inosinicase</fullName>
        </alternativeName>
    </domain>
</protein>
<name>PUR9_MICAN</name>
<organism>
    <name type="scientific">Microcystis aeruginosa (strain NIES-843 / IAM M-2473)</name>
    <dbReference type="NCBI Taxonomy" id="449447"/>
    <lineage>
        <taxon>Bacteria</taxon>
        <taxon>Bacillati</taxon>
        <taxon>Cyanobacteriota</taxon>
        <taxon>Cyanophyceae</taxon>
        <taxon>Oscillatoriophycideae</taxon>
        <taxon>Chroococcales</taxon>
        <taxon>Microcystaceae</taxon>
        <taxon>Microcystis</taxon>
    </lineage>
</organism>
<feature type="chain" id="PRO_1000076485" description="Bifunctional purine biosynthesis protein PurH">
    <location>
        <begin position="1"/>
        <end position="511"/>
    </location>
</feature>
<feature type="domain" description="MGS-like" evidence="2">
    <location>
        <begin position="1"/>
        <end position="146"/>
    </location>
</feature>
<accession>B0JL55</accession>
<gene>
    <name evidence="1" type="primary">purH</name>
    <name type="ordered locus">MAE_62320</name>
</gene>
<sequence length="511" mass="54930">MGRLALISVTDKTGIVDFARQLTEEFDFEIISSGGTAKTLQSAGIPVIKVGEYTGSPEILGGRVKTLHPRIHGGILARRDWQSDLAEMEANQIRPFDLVVVNLYPFEQTIANPDVTTAQAIEQIDIGGPAMLRASAKNFAHLTVISNPKYYEQYLSQLRQNNGEISLEFRQKMAGETFALTNAYDGAIAAYFASLNGETTRFNLAGNALQTLRYGENPHQSATWYGSGTMAQGWGKATLLQGKELSYNNLVDLEAARRLIAEFGSEEPAAAILKHTNPCGVAIGGSLVEAYTKAFNADAISAFGGIVALNQAIDEATAKELTKTFLECVVAPDCSPEAQDILAKKSKVRILLLPDLTTGEKQTVKVIAGGFLVQAADDVVETPDEWRVVTEKQPTPAQLAELLFAWKVSKHVKSNAIVVTKNQTTLGVGAGQMNRVGSVKIALEQAAEAAKGGYLASDGFFPFDDSVRTAAQFGIEAIVQPGGSLKDQDSINAANELGLIMVLTGIRHFLH</sequence>
<reference key="1">
    <citation type="journal article" date="2007" name="DNA Res.">
        <title>Complete genomic structure of the bloom-forming toxic cyanobacterium Microcystis aeruginosa NIES-843.</title>
        <authorList>
            <person name="Kaneko T."/>
            <person name="Nakajima N."/>
            <person name="Okamoto S."/>
            <person name="Suzuki I."/>
            <person name="Tanabe Y."/>
            <person name="Tamaoki M."/>
            <person name="Nakamura Y."/>
            <person name="Kasai F."/>
            <person name="Watanabe A."/>
            <person name="Kawashima K."/>
            <person name="Kishida Y."/>
            <person name="Ono A."/>
            <person name="Shimizu Y."/>
            <person name="Takahashi C."/>
            <person name="Minami C."/>
            <person name="Fujishiro T."/>
            <person name="Kohara M."/>
            <person name="Katoh M."/>
            <person name="Nakazaki N."/>
            <person name="Nakayama S."/>
            <person name="Yamada M."/>
            <person name="Tabata S."/>
            <person name="Watanabe M.M."/>
        </authorList>
    </citation>
    <scope>NUCLEOTIDE SEQUENCE [LARGE SCALE GENOMIC DNA]</scope>
    <source>
        <strain>NIES-843 / IAM M-247</strain>
    </source>
</reference>
<comment type="catalytic activity">
    <reaction evidence="1">
        <text>(6R)-10-formyltetrahydrofolate + 5-amino-1-(5-phospho-beta-D-ribosyl)imidazole-4-carboxamide = 5-formamido-1-(5-phospho-D-ribosyl)imidazole-4-carboxamide + (6S)-5,6,7,8-tetrahydrofolate</text>
        <dbReference type="Rhea" id="RHEA:22192"/>
        <dbReference type="ChEBI" id="CHEBI:57453"/>
        <dbReference type="ChEBI" id="CHEBI:58467"/>
        <dbReference type="ChEBI" id="CHEBI:58475"/>
        <dbReference type="ChEBI" id="CHEBI:195366"/>
        <dbReference type="EC" id="2.1.2.3"/>
    </reaction>
</comment>
<comment type="catalytic activity">
    <reaction evidence="1">
        <text>IMP + H2O = 5-formamido-1-(5-phospho-D-ribosyl)imidazole-4-carboxamide</text>
        <dbReference type="Rhea" id="RHEA:18445"/>
        <dbReference type="ChEBI" id="CHEBI:15377"/>
        <dbReference type="ChEBI" id="CHEBI:58053"/>
        <dbReference type="ChEBI" id="CHEBI:58467"/>
        <dbReference type="EC" id="3.5.4.10"/>
    </reaction>
</comment>
<comment type="pathway">
    <text evidence="1">Purine metabolism; IMP biosynthesis via de novo pathway; 5-formamido-1-(5-phospho-D-ribosyl)imidazole-4-carboxamide from 5-amino-1-(5-phospho-D-ribosyl)imidazole-4-carboxamide (10-formyl THF route): step 1/1.</text>
</comment>
<comment type="pathway">
    <text evidence="1">Purine metabolism; IMP biosynthesis via de novo pathway; IMP from 5-formamido-1-(5-phospho-D-ribosyl)imidazole-4-carboxamide: step 1/1.</text>
</comment>
<comment type="domain">
    <text evidence="1">The IMP cyclohydrolase activity resides in the N-terminal region.</text>
</comment>
<comment type="similarity">
    <text evidence="1">Belongs to the PurH family.</text>
</comment>
<dbReference type="EC" id="2.1.2.3" evidence="1"/>
<dbReference type="EC" id="3.5.4.10" evidence="1"/>
<dbReference type="EMBL" id="AP009552">
    <property type="protein sequence ID" value="BAG06054.1"/>
    <property type="molecule type" value="Genomic_DNA"/>
</dbReference>
<dbReference type="RefSeq" id="WP_012268340.1">
    <property type="nucleotide sequence ID" value="NC_010296.1"/>
</dbReference>
<dbReference type="SMR" id="B0JL55"/>
<dbReference type="STRING" id="449447.MAE_62320"/>
<dbReference type="PaxDb" id="449447-MAE_62320"/>
<dbReference type="EnsemblBacteria" id="BAG06054">
    <property type="protein sequence ID" value="BAG06054"/>
    <property type="gene ID" value="MAE_62320"/>
</dbReference>
<dbReference type="KEGG" id="mar:MAE_62320"/>
<dbReference type="PATRIC" id="fig|449447.4.peg.5712"/>
<dbReference type="eggNOG" id="COG0138">
    <property type="taxonomic scope" value="Bacteria"/>
</dbReference>
<dbReference type="HOGENOM" id="CLU_016316_5_2_3"/>
<dbReference type="BioCyc" id="MAER449447:MAE_RS27245-MONOMER"/>
<dbReference type="UniPathway" id="UPA00074">
    <property type="reaction ID" value="UER00133"/>
</dbReference>
<dbReference type="UniPathway" id="UPA00074">
    <property type="reaction ID" value="UER00135"/>
</dbReference>
<dbReference type="Proteomes" id="UP000001510">
    <property type="component" value="Chromosome"/>
</dbReference>
<dbReference type="GO" id="GO:0005829">
    <property type="term" value="C:cytosol"/>
    <property type="evidence" value="ECO:0007669"/>
    <property type="project" value="TreeGrafter"/>
</dbReference>
<dbReference type="GO" id="GO:0003937">
    <property type="term" value="F:IMP cyclohydrolase activity"/>
    <property type="evidence" value="ECO:0007669"/>
    <property type="project" value="UniProtKB-UniRule"/>
</dbReference>
<dbReference type="GO" id="GO:0004643">
    <property type="term" value="F:phosphoribosylaminoimidazolecarboxamide formyltransferase activity"/>
    <property type="evidence" value="ECO:0007669"/>
    <property type="project" value="UniProtKB-UniRule"/>
</dbReference>
<dbReference type="GO" id="GO:0006189">
    <property type="term" value="P:'de novo' IMP biosynthetic process"/>
    <property type="evidence" value="ECO:0007669"/>
    <property type="project" value="UniProtKB-UniRule"/>
</dbReference>
<dbReference type="CDD" id="cd01421">
    <property type="entry name" value="IMPCH"/>
    <property type="match status" value="1"/>
</dbReference>
<dbReference type="FunFam" id="3.40.140.20:FF:000001">
    <property type="entry name" value="Bifunctional purine biosynthesis protein PurH"/>
    <property type="match status" value="1"/>
</dbReference>
<dbReference type="FunFam" id="3.40.50.1380:FF:000001">
    <property type="entry name" value="Bifunctional purine biosynthesis protein PurH"/>
    <property type="match status" value="1"/>
</dbReference>
<dbReference type="Gene3D" id="3.40.140.20">
    <property type="match status" value="2"/>
</dbReference>
<dbReference type="Gene3D" id="3.40.50.1380">
    <property type="entry name" value="Methylglyoxal synthase-like domain"/>
    <property type="match status" value="1"/>
</dbReference>
<dbReference type="HAMAP" id="MF_00139">
    <property type="entry name" value="PurH"/>
    <property type="match status" value="1"/>
</dbReference>
<dbReference type="InterPro" id="IPR024051">
    <property type="entry name" value="AICAR_Tfase_dup_dom_sf"/>
</dbReference>
<dbReference type="InterPro" id="IPR016193">
    <property type="entry name" value="Cytidine_deaminase-like"/>
</dbReference>
<dbReference type="InterPro" id="IPR011607">
    <property type="entry name" value="MGS-like_dom"/>
</dbReference>
<dbReference type="InterPro" id="IPR036914">
    <property type="entry name" value="MGS-like_dom_sf"/>
</dbReference>
<dbReference type="InterPro" id="IPR002695">
    <property type="entry name" value="PurH-like"/>
</dbReference>
<dbReference type="NCBIfam" id="NF002049">
    <property type="entry name" value="PRK00881.1"/>
    <property type="match status" value="1"/>
</dbReference>
<dbReference type="NCBIfam" id="TIGR00355">
    <property type="entry name" value="purH"/>
    <property type="match status" value="1"/>
</dbReference>
<dbReference type="PANTHER" id="PTHR11692:SF0">
    <property type="entry name" value="BIFUNCTIONAL PURINE BIOSYNTHESIS PROTEIN ATIC"/>
    <property type="match status" value="1"/>
</dbReference>
<dbReference type="PANTHER" id="PTHR11692">
    <property type="entry name" value="BIFUNCTIONAL PURINE BIOSYNTHESIS PROTEIN PURH"/>
    <property type="match status" value="1"/>
</dbReference>
<dbReference type="Pfam" id="PF01808">
    <property type="entry name" value="AICARFT_IMPCHas"/>
    <property type="match status" value="1"/>
</dbReference>
<dbReference type="Pfam" id="PF02142">
    <property type="entry name" value="MGS"/>
    <property type="match status" value="1"/>
</dbReference>
<dbReference type="PIRSF" id="PIRSF000414">
    <property type="entry name" value="AICARFT_IMPCHas"/>
    <property type="match status" value="1"/>
</dbReference>
<dbReference type="SMART" id="SM00798">
    <property type="entry name" value="AICARFT_IMPCHas"/>
    <property type="match status" value="1"/>
</dbReference>
<dbReference type="SMART" id="SM00851">
    <property type="entry name" value="MGS"/>
    <property type="match status" value="1"/>
</dbReference>
<dbReference type="SUPFAM" id="SSF53927">
    <property type="entry name" value="Cytidine deaminase-like"/>
    <property type="match status" value="1"/>
</dbReference>
<dbReference type="SUPFAM" id="SSF52335">
    <property type="entry name" value="Methylglyoxal synthase-like"/>
    <property type="match status" value="1"/>
</dbReference>
<dbReference type="PROSITE" id="PS51855">
    <property type="entry name" value="MGS"/>
    <property type="match status" value="1"/>
</dbReference>
<keyword id="KW-0378">Hydrolase</keyword>
<keyword id="KW-0511">Multifunctional enzyme</keyword>
<keyword id="KW-0658">Purine biosynthesis</keyword>
<keyword id="KW-0808">Transferase</keyword>
<proteinExistence type="inferred from homology"/>
<evidence type="ECO:0000255" key="1">
    <source>
        <dbReference type="HAMAP-Rule" id="MF_00139"/>
    </source>
</evidence>
<evidence type="ECO:0000255" key="2">
    <source>
        <dbReference type="PROSITE-ProRule" id="PRU01202"/>
    </source>
</evidence>